<protein>
    <recommendedName>
        <fullName evidence="1">Valine--tRNA ligase</fullName>
        <ecNumber evidence="1">6.1.1.9</ecNumber>
    </recommendedName>
    <alternativeName>
        <fullName evidence="1">Valyl-tRNA synthetase</fullName>
        <shortName evidence="1">ValRS</shortName>
    </alternativeName>
</protein>
<accession>Q6HD68</accession>
<evidence type="ECO:0000255" key="1">
    <source>
        <dbReference type="HAMAP-Rule" id="MF_02004"/>
    </source>
</evidence>
<comment type="function">
    <text evidence="1">Catalyzes the attachment of valine to tRNA(Val). As ValRS can inadvertently accommodate and process structurally similar amino acids such as threonine, to avoid such errors, it has a 'posttransfer' editing activity that hydrolyzes mischarged Thr-tRNA(Val) in a tRNA-dependent manner.</text>
</comment>
<comment type="catalytic activity">
    <reaction evidence="1">
        <text>tRNA(Val) + L-valine + ATP = L-valyl-tRNA(Val) + AMP + diphosphate</text>
        <dbReference type="Rhea" id="RHEA:10704"/>
        <dbReference type="Rhea" id="RHEA-COMP:9672"/>
        <dbReference type="Rhea" id="RHEA-COMP:9708"/>
        <dbReference type="ChEBI" id="CHEBI:30616"/>
        <dbReference type="ChEBI" id="CHEBI:33019"/>
        <dbReference type="ChEBI" id="CHEBI:57762"/>
        <dbReference type="ChEBI" id="CHEBI:78442"/>
        <dbReference type="ChEBI" id="CHEBI:78537"/>
        <dbReference type="ChEBI" id="CHEBI:456215"/>
        <dbReference type="EC" id="6.1.1.9"/>
    </reaction>
</comment>
<comment type="subunit">
    <text evidence="1">Monomer.</text>
</comment>
<comment type="subcellular location">
    <subcellularLocation>
        <location evidence="1">Cytoplasm</location>
    </subcellularLocation>
</comment>
<comment type="domain">
    <text evidence="1">ValRS has two distinct active sites: one for aminoacylation and one for editing. The misactivated threonine is translocated from the active site to the editing site.</text>
</comment>
<comment type="domain">
    <text evidence="1">The C-terminal coiled-coil domain is crucial for aminoacylation activity.</text>
</comment>
<comment type="similarity">
    <text evidence="1">Belongs to the class-I aminoacyl-tRNA synthetase family. ValS type 1 subfamily.</text>
</comment>
<reference key="1">
    <citation type="journal article" date="2006" name="J. Bacteriol.">
        <title>Pathogenomic sequence analysis of Bacillus cereus and Bacillus thuringiensis isolates closely related to Bacillus anthracis.</title>
        <authorList>
            <person name="Han C.S."/>
            <person name="Xie G."/>
            <person name="Challacombe J.F."/>
            <person name="Altherr M.R."/>
            <person name="Bhotika S.S."/>
            <person name="Bruce D."/>
            <person name="Campbell C.S."/>
            <person name="Campbell M.L."/>
            <person name="Chen J."/>
            <person name="Chertkov O."/>
            <person name="Cleland C."/>
            <person name="Dimitrijevic M."/>
            <person name="Doggett N.A."/>
            <person name="Fawcett J.J."/>
            <person name="Glavina T."/>
            <person name="Goodwin L.A."/>
            <person name="Hill K.K."/>
            <person name="Hitchcock P."/>
            <person name="Jackson P.J."/>
            <person name="Keim P."/>
            <person name="Kewalramani A.R."/>
            <person name="Longmire J."/>
            <person name="Lucas S."/>
            <person name="Malfatti S."/>
            <person name="McMurry K."/>
            <person name="Meincke L.J."/>
            <person name="Misra M."/>
            <person name="Moseman B.L."/>
            <person name="Mundt M."/>
            <person name="Munk A.C."/>
            <person name="Okinaka R.T."/>
            <person name="Parson-Quintana B."/>
            <person name="Reilly L.P."/>
            <person name="Richardson P."/>
            <person name="Robinson D.L."/>
            <person name="Rubin E."/>
            <person name="Saunders E."/>
            <person name="Tapia R."/>
            <person name="Tesmer J.G."/>
            <person name="Thayer N."/>
            <person name="Thompson L.S."/>
            <person name="Tice H."/>
            <person name="Ticknor L.O."/>
            <person name="Wills P.L."/>
            <person name="Brettin T.S."/>
            <person name="Gilna P."/>
        </authorList>
    </citation>
    <scope>NUCLEOTIDE SEQUENCE [LARGE SCALE GENOMIC DNA]</scope>
    <source>
        <strain>97-27</strain>
    </source>
</reference>
<feature type="chain" id="PRO_0000224436" description="Valine--tRNA ligase">
    <location>
        <begin position="1"/>
        <end position="881"/>
    </location>
</feature>
<feature type="coiled-coil region" evidence="1">
    <location>
        <begin position="810"/>
        <end position="881"/>
    </location>
</feature>
<feature type="short sequence motif" description="'HIGH' region">
    <location>
        <begin position="49"/>
        <end position="59"/>
    </location>
</feature>
<feature type="short sequence motif" description="'KMSKS' region">
    <location>
        <begin position="526"/>
        <end position="530"/>
    </location>
</feature>
<feature type="binding site" evidence="1">
    <location>
        <position position="529"/>
    </location>
    <ligand>
        <name>ATP</name>
        <dbReference type="ChEBI" id="CHEBI:30616"/>
    </ligand>
</feature>
<name>SYV_BACHK</name>
<sequence length="881" mass="101701">MSNTEKNLPTKYDHMSVEEGLYQWWLEGKYFEATGDEKKQPYTIVIPPPNVTGKLHLGHAWDTTLQDILTRTKRMQGYDVLWLPGMDHAGIATQAKVEGKLREEGISRYDLGREKFLEKAWEWKEEYASHIRQQWGKVGLGLDYSRERFTLDKGLSDAVNKVFVQLYEKGLIYRGEYIINWDPATRTALSDIEVIHKEVQGAFYHMNYPLTDGSGHIRLATTRPETMLGDTAVAVHPEDDRYKHLIGKTVTLPIVGREIPIIADEYVEKDFGTGVVKITPAHDPNDFEVGNRHDLPRILVMNEDGSMNEKAGKYNGMDRFECRKALVKDLQEAGVLVEIEPHMHSVGHSERSGAVVEPYLSTQWFVKMAPLAEKAIELQQKEEEKVTFVPDRFENTYLRWMENIHDWCISRQLWWGHRIPAWYHKETGEVYVGTEAPADIENWNQDNDVLDTWFSSALWPFSTLGWPNEDAADFKRYYSTDALVTGYDIIFFWVSRMIFQGLEFTGERPFKDVLIHGLVRDEQGRKMSKSLGNGIDPMDVIEKYGADAMRFFLSTGSAPGQDLRFSMEKVESTWNFINKIWNASRFVLMNMDDMKFEEIDLTGEKSVADKWILTRLNETIESVTRNMDKYEFGEAGRSLYNFIWDDFCDWYIEMAKLPLYGEDEAAKKTTRSILSYVLDQTMRLLHPFMPFVTEKIWQHLPHEGESITVAAWPTVREDLQDTEAAAEMHLLVDIIRSVRNIRAEVNTPMSKKVQMQIKAKDEAVLAQLTKNSSYIERFCNPSELTIQTDLQAPEKAMTAIVTGAELFLPLADLINLDEERARLEKELEKFDKEVERVQKKLSNQGFVAKAPAAVIEGERAKEQDYLEKREAVRQRLADLEK</sequence>
<keyword id="KW-0030">Aminoacyl-tRNA synthetase</keyword>
<keyword id="KW-0067">ATP-binding</keyword>
<keyword id="KW-0175">Coiled coil</keyword>
<keyword id="KW-0963">Cytoplasm</keyword>
<keyword id="KW-0436">Ligase</keyword>
<keyword id="KW-0547">Nucleotide-binding</keyword>
<keyword id="KW-0648">Protein biosynthesis</keyword>
<proteinExistence type="inferred from homology"/>
<dbReference type="EC" id="6.1.1.9" evidence="1"/>
<dbReference type="EMBL" id="AE017355">
    <property type="protein sequence ID" value="AAT60844.1"/>
    <property type="molecule type" value="Genomic_DNA"/>
</dbReference>
<dbReference type="RefSeq" id="WP_000072238.1">
    <property type="nucleotide sequence ID" value="NC_005957.1"/>
</dbReference>
<dbReference type="RefSeq" id="YP_038508.1">
    <property type="nucleotide sequence ID" value="NC_005957.1"/>
</dbReference>
<dbReference type="SMR" id="Q6HD68"/>
<dbReference type="KEGG" id="btk:BT9727_4191"/>
<dbReference type="PATRIC" id="fig|281309.8.peg.4469"/>
<dbReference type="HOGENOM" id="CLU_001493_0_2_9"/>
<dbReference type="Proteomes" id="UP000001301">
    <property type="component" value="Chromosome"/>
</dbReference>
<dbReference type="GO" id="GO:0005829">
    <property type="term" value="C:cytosol"/>
    <property type="evidence" value="ECO:0007669"/>
    <property type="project" value="TreeGrafter"/>
</dbReference>
<dbReference type="GO" id="GO:0002161">
    <property type="term" value="F:aminoacyl-tRNA deacylase activity"/>
    <property type="evidence" value="ECO:0007669"/>
    <property type="project" value="InterPro"/>
</dbReference>
<dbReference type="GO" id="GO:0005524">
    <property type="term" value="F:ATP binding"/>
    <property type="evidence" value="ECO:0007669"/>
    <property type="project" value="UniProtKB-UniRule"/>
</dbReference>
<dbReference type="GO" id="GO:0004832">
    <property type="term" value="F:valine-tRNA ligase activity"/>
    <property type="evidence" value="ECO:0007669"/>
    <property type="project" value="UniProtKB-UniRule"/>
</dbReference>
<dbReference type="GO" id="GO:0006438">
    <property type="term" value="P:valyl-tRNA aminoacylation"/>
    <property type="evidence" value="ECO:0007669"/>
    <property type="project" value="UniProtKB-UniRule"/>
</dbReference>
<dbReference type="CDD" id="cd07962">
    <property type="entry name" value="Anticodon_Ia_Val"/>
    <property type="match status" value="1"/>
</dbReference>
<dbReference type="CDD" id="cd00817">
    <property type="entry name" value="ValRS_core"/>
    <property type="match status" value="1"/>
</dbReference>
<dbReference type="FunFam" id="1.10.287.380:FF:000001">
    <property type="entry name" value="Valine--tRNA ligase"/>
    <property type="match status" value="1"/>
</dbReference>
<dbReference type="FunFam" id="1.10.730.10:FF:000014">
    <property type="entry name" value="Valine--tRNA ligase"/>
    <property type="match status" value="1"/>
</dbReference>
<dbReference type="FunFam" id="3.40.50.620:FF:000032">
    <property type="entry name" value="Valine--tRNA ligase"/>
    <property type="match status" value="1"/>
</dbReference>
<dbReference type="FunFam" id="3.40.50.620:FF:000098">
    <property type="entry name" value="Valine--tRNA ligase"/>
    <property type="match status" value="1"/>
</dbReference>
<dbReference type="FunFam" id="3.90.740.10:FF:000005">
    <property type="entry name" value="Valine--tRNA ligase, mitochondrial"/>
    <property type="match status" value="1"/>
</dbReference>
<dbReference type="Gene3D" id="3.40.50.620">
    <property type="entry name" value="HUPs"/>
    <property type="match status" value="2"/>
</dbReference>
<dbReference type="Gene3D" id="1.10.730.10">
    <property type="entry name" value="Isoleucyl-tRNA Synthetase, Domain 1"/>
    <property type="match status" value="1"/>
</dbReference>
<dbReference type="Gene3D" id="1.10.287.380">
    <property type="entry name" value="Valyl-tRNA synthetase, C-terminal domain"/>
    <property type="match status" value="1"/>
</dbReference>
<dbReference type="Gene3D" id="3.90.740.10">
    <property type="entry name" value="Valyl/Leucyl/Isoleucyl-tRNA synthetase, editing domain"/>
    <property type="match status" value="1"/>
</dbReference>
<dbReference type="HAMAP" id="MF_02004">
    <property type="entry name" value="Val_tRNA_synth_type1"/>
    <property type="match status" value="1"/>
</dbReference>
<dbReference type="InterPro" id="IPR001412">
    <property type="entry name" value="aa-tRNA-synth_I_CS"/>
</dbReference>
<dbReference type="InterPro" id="IPR002300">
    <property type="entry name" value="aa-tRNA-synth_Ia"/>
</dbReference>
<dbReference type="InterPro" id="IPR033705">
    <property type="entry name" value="Anticodon_Ia_Val"/>
</dbReference>
<dbReference type="InterPro" id="IPR013155">
    <property type="entry name" value="M/V/L/I-tRNA-synth_anticd-bd"/>
</dbReference>
<dbReference type="InterPro" id="IPR014729">
    <property type="entry name" value="Rossmann-like_a/b/a_fold"/>
</dbReference>
<dbReference type="InterPro" id="IPR010978">
    <property type="entry name" value="tRNA-bd_arm"/>
</dbReference>
<dbReference type="InterPro" id="IPR009080">
    <property type="entry name" value="tRNAsynth_Ia_anticodon-bd"/>
</dbReference>
<dbReference type="InterPro" id="IPR037118">
    <property type="entry name" value="Val-tRNA_synth_C_sf"/>
</dbReference>
<dbReference type="InterPro" id="IPR019499">
    <property type="entry name" value="Val-tRNA_synth_tRNA-bd"/>
</dbReference>
<dbReference type="InterPro" id="IPR009008">
    <property type="entry name" value="Val/Leu/Ile-tRNA-synth_edit"/>
</dbReference>
<dbReference type="InterPro" id="IPR002303">
    <property type="entry name" value="Valyl-tRNA_ligase"/>
</dbReference>
<dbReference type="NCBIfam" id="NF004349">
    <property type="entry name" value="PRK05729.1"/>
    <property type="match status" value="1"/>
</dbReference>
<dbReference type="NCBIfam" id="TIGR00422">
    <property type="entry name" value="valS"/>
    <property type="match status" value="1"/>
</dbReference>
<dbReference type="PANTHER" id="PTHR11946:SF93">
    <property type="entry name" value="VALINE--TRNA LIGASE, CHLOROPLASTIC_MITOCHONDRIAL 2"/>
    <property type="match status" value="1"/>
</dbReference>
<dbReference type="PANTHER" id="PTHR11946">
    <property type="entry name" value="VALYL-TRNA SYNTHETASES"/>
    <property type="match status" value="1"/>
</dbReference>
<dbReference type="Pfam" id="PF08264">
    <property type="entry name" value="Anticodon_1"/>
    <property type="match status" value="1"/>
</dbReference>
<dbReference type="Pfam" id="PF00133">
    <property type="entry name" value="tRNA-synt_1"/>
    <property type="match status" value="2"/>
</dbReference>
<dbReference type="Pfam" id="PF10458">
    <property type="entry name" value="Val_tRNA-synt_C"/>
    <property type="match status" value="1"/>
</dbReference>
<dbReference type="PRINTS" id="PR00986">
    <property type="entry name" value="TRNASYNTHVAL"/>
</dbReference>
<dbReference type="SUPFAM" id="SSF47323">
    <property type="entry name" value="Anticodon-binding domain of a subclass of class I aminoacyl-tRNA synthetases"/>
    <property type="match status" value="1"/>
</dbReference>
<dbReference type="SUPFAM" id="SSF52374">
    <property type="entry name" value="Nucleotidylyl transferase"/>
    <property type="match status" value="1"/>
</dbReference>
<dbReference type="SUPFAM" id="SSF46589">
    <property type="entry name" value="tRNA-binding arm"/>
    <property type="match status" value="1"/>
</dbReference>
<dbReference type="SUPFAM" id="SSF50677">
    <property type="entry name" value="ValRS/IleRS/LeuRS editing domain"/>
    <property type="match status" value="1"/>
</dbReference>
<dbReference type="PROSITE" id="PS00178">
    <property type="entry name" value="AA_TRNA_LIGASE_I"/>
    <property type="match status" value="1"/>
</dbReference>
<gene>
    <name evidence="1" type="primary">valS</name>
    <name type="ordered locus">BT9727_4191</name>
</gene>
<organism>
    <name type="scientific">Bacillus thuringiensis subsp. konkukian (strain 97-27)</name>
    <dbReference type="NCBI Taxonomy" id="281309"/>
    <lineage>
        <taxon>Bacteria</taxon>
        <taxon>Bacillati</taxon>
        <taxon>Bacillota</taxon>
        <taxon>Bacilli</taxon>
        <taxon>Bacillales</taxon>
        <taxon>Bacillaceae</taxon>
        <taxon>Bacillus</taxon>
        <taxon>Bacillus cereus group</taxon>
    </lineage>
</organism>